<feature type="chain" id="PRO_0000254956" description="NADH-ubiquinone oxidoreductase chain 3">
    <location>
        <begin position="1"/>
        <end position="115"/>
    </location>
</feature>
<feature type="transmembrane region" description="Helical" evidence="3">
    <location>
        <begin position="4"/>
        <end position="24"/>
    </location>
</feature>
<feature type="transmembrane region" description="Helical" evidence="3">
    <location>
        <begin position="55"/>
        <end position="75"/>
    </location>
</feature>
<feature type="transmembrane region" description="Helical" evidence="3">
    <location>
        <begin position="87"/>
        <end position="107"/>
    </location>
</feature>
<sequence length="115" mass="13101">MNMLTVLSVNIALSTCLITIAFWLPQLNLYTEKANPYECGFDPMSSARLPFSMKFFLVAITFLLFDLEIALLLPLPWAIQMNNINTMMLTAFILVSVLALGLAYEWMQKGLEWTE</sequence>
<geneLocation type="mitochondrion"/>
<reference key="1">
    <citation type="submission" date="1995-11" db="EMBL/GenBank/DDBJ databases">
        <title>Mitochondrial DNA analysis of the systematic relationships within the Peromyscus maniculatus species group.</title>
        <authorList>
            <person name="Hogan K.M."/>
            <person name="Davis S.K."/>
            <person name="Greenbaum I.F."/>
        </authorList>
    </citation>
    <scope>NUCLEOTIDE SEQUENCE [GENOMIC DNA]</scope>
</reference>
<protein>
    <recommendedName>
        <fullName evidence="1">NADH-ubiquinone oxidoreductase chain 3</fullName>
        <ecNumber evidence="1">7.1.1.2</ecNumber>
    </recommendedName>
    <alternativeName>
        <fullName>NADH dehydrogenase subunit 3</fullName>
    </alternativeName>
</protein>
<comment type="function">
    <text evidence="1">Core subunit of the mitochondrial membrane respiratory chain NADH dehydrogenase (Complex I) which catalyzes electron transfer from NADH through the respiratory chain, using ubiquinone as an electron acceptor. Essential for the catalytic activity of complex I.</text>
</comment>
<comment type="catalytic activity">
    <reaction evidence="1">
        <text>a ubiquinone + NADH + 5 H(+)(in) = a ubiquinol + NAD(+) + 4 H(+)(out)</text>
        <dbReference type="Rhea" id="RHEA:29091"/>
        <dbReference type="Rhea" id="RHEA-COMP:9565"/>
        <dbReference type="Rhea" id="RHEA-COMP:9566"/>
        <dbReference type="ChEBI" id="CHEBI:15378"/>
        <dbReference type="ChEBI" id="CHEBI:16389"/>
        <dbReference type="ChEBI" id="CHEBI:17976"/>
        <dbReference type="ChEBI" id="CHEBI:57540"/>
        <dbReference type="ChEBI" id="CHEBI:57945"/>
        <dbReference type="EC" id="7.1.1.2"/>
    </reaction>
</comment>
<comment type="subunit">
    <text evidence="1">Core subunit of respiratory chain NADH dehydrogenase (Complex I) which is composed of 45 different subunits. Interacts with TMEM186. Interacts with TMEM242 (By similarity).</text>
</comment>
<comment type="subcellular location">
    <subcellularLocation>
        <location evidence="2">Mitochondrion inner membrane</location>
        <topology evidence="3">Multi-pass membrane protein</topology>
    </subcellularLocation>
</comment>
<comment type="similarity">
    <text evidence="4">Belongs to the complex I subunit 3 family.</text>
</comment>
<dbReference type="EC" id="7.1.1.2" evidence="1"/>
<dbReference type="EMBL" id="U40248">
    <property type="protein sequence ID" value="AAB17936.1"/>
    <property type="molecule type" value="Genomic_DNA"/>
</dbReference>
<dbReference type="SMR" id="Q95928"/>
<dbReference type="GO" id="GO:0005743">
    <property type="term" value="C:mitochondrial inner membrane"/>
    <property type="evidence" value="ECO:0000250"/>
    <property type="project" value="UniProtKB"/>
</dbReference>
<dbReference type="GO" id="GO:0030964">
    <property type="term" value="C:NADH dehydrogenase complex"/>
    <property type="evidence" value="ECO:0007669"/>
    <property type="project" value="TreeGrafter"/>
</dbReference>
<dbReference type="GO" id="GO:0008137">
    <property type="term" value="F:NADH dehydrogenase (ubiquinone) activity"/>
    <property type="evidence" value="ECO:0000250"/>
    <property type="project" value="UniProtKB"/>
</dbReference>
<dbReference type="GO" id="GO:0006120">
    <property type="term" value="P:mitochondrial electron transport, NADH to ubiquinone"/>
    <property type="evidence" value="ECO:0000250"/>
    <property type="project" value="UniProtKB"/>
</dbReference>
<dbReference type="FunFam" id="1.20.58.1610:FF:000004">
    <property type="entry name" value="NADH-quinone oxidoreductase subunit A"/>
    <property type="match status" value="1"/>
</dbReference>
<dbReference type="Gene3D" id="1.20.58.1610">
    <property type="entry name" value="NADH:ubiquinone/plastoquinone oxidoreductase, chain 3"/>
    <property type="match status" value="1"/>
</dbReference>
<dbReference type="InterPro" id="IPR000440">
    <property type="entry name" value="NADH_UbQ/plastoQ_OxRdtase_su3"/>
</dbReference>
<dbReference type="InterPro" id="IPR038430">
    <property type="entry name" value="NDAH_ubi_oxred_su3_sf"/>
</dbReference>
<dbReference type="PANTHER" id="PTHR11058">
    <property type="entry name" value="NADH-UBIQUINONE OXIDOREDUCTASE CHAIN 3"/>
    <property type="match status" value="1"/>
</dbReference>
<dbReference type="PANTHER" id="PTHR11058:SF9">
    <property type="entry name" value="NADH-UBIQUINONE OXIDOREDUCTASE CHAIN 3"/>
    <property type="match status" value="1"/>
</dbReference>
<dbReference type="Pfam" id="PF00507">
    <property type="entry name" value="Oxidored_q4"/>
    <property type="match status" value="1"/>
</dbReference>
<proteinExistence type="inferred from homology"/>
<gene>
    <name evidence="1" type="primary">MT-ND3</name>
    <name type="synonym">MTND3</name>
    <name type="synonym">NADH3</name>
    <name type="synonym">ND3</name>
</gene>
<name>NU3M_PERSL</name>
<accession>Q95928</accession>
<keyword id="KW-0249">Electron transport</keyword>
<keyword id="KW-0472">Membrane</keyword>
<keyword id="KW-0496">Mitochondrion</keyword>
<keyword id="KW-0999">Mitochondrion inner membrane</keyword>
<keyword id="KW-0520">NAD</keyword>
<keyword id="KW-0679">Respiratory chain</keyword>
<keyword id="KW-1278">Translocase</keyword>
<keyword id="KW-0812">Transmembrane</keyword>
<keyword id="KW-1133">Transmembrane helix</keyword>
<keyword id="KW-0813">Transport</keyword>
<keyword id="KW-0830">Ubiquinone</keyword>
<evidence type="ECO:0000250" key="1">
    <source>
        <dbReference type="UniProtKB" id="P03897"/>
    </source>
</evidence>
<evidence type="ECO:0000250" key="2">
    <source>
        <dbReference type="UniProtKB" id="P03898"/>
    </source>
</evidence>
<evidence type="ECO:0000255" key="3"/>
<evidence type="ECO:0000305" key="4"/>
<organism>
    <name type="scientific">Peromyscus slevini</name>
    <name type="common">Slevin's mouse</name>
    <dbReference type="NCBI Taxonomy" id="44242"/>
    <lineage>
        <taxon>Eukaryota</taxon>
        <taxon>Metazoa</taxon>
        <taxon>Chordata</taxon>
        <taxon>Craniata</taxon>
        <taxon>Vertebrata</taxon>
        <taxon>Euteleostomi</taxon>
        <taxon>Mammalia</taxon>
        <taxon>Eutheria</taxon>
        <taxon>Euarchontoglires</taxon>
        <taxon>Glires</taxon>
        <taxon>Rodentia</taxon>
        <taxon>Myomorpha</taxon>
        <taxon>Muroidea</taxon>
        <taxon>Cricetidae</taxon>
        <taxon>Neotominae</taxon>
        <taxon>Peromyscus</taxon>
    </lineage>
</organism>